<organism>
    <name type="scientific">Haemophilus influenzae (strain 86-028NP)</name>
    <dbReference type="NCBI Taxonomy" id="281310"/>
    <lineage>
        <taxon>Bacteria</taxon>
        <taxon>Pseudomonadati</taxon>
        <taxon>Pseudomonadota</taxon>
        <taxon>Gammaproteobacteria</taxon>
        <taxon>Pasteurellales</taxon>
        <taxon>Pasteurellaceae</taxon>
        <taxon>Haemophilus</taxon>
    </lineage>
</organism>
<reference key="1">
    <citation type="journal article" date="2005" name="J. Bacteriol.">
        <title>Genomic sequence of an otitis media isolate of nontypeable Haemophilus influenzae: comparative study with H. influenzae serotype d, strain KW20.</title>
        <authorList>
            <person name="Harrison A."/>
            <person name="Dyer D.W."/>
            <person name="Gillaspy A."/>
            <person name="Ray W.C."/>
            <person name="Mungur R."/>
            <person name="Carson M.B."/>
            <person name="Zhong H."/>
            <person name="Gipson J."/>
            <person name="Gipson M."/>
            <person name="Johnson L.S."/>
            <person name="Lewis L."/>
            <person name="Bakaletz L.O."/>
            <person name="Munson R.S. Jr."/>
        </authorList>
    </citation>
    <scope>NUCLEOTIDE SEQUENCE [LARGE SCALE GENOMIC DNA]</scope>
    <source>
        <strain>86-028NP</strain>
    </source>
</reference>
<feature type="chain" id="PRO_0000063136" description="Purine nucleoside phosphorylase DeoD-type">
    <location>
        <begin position="1"/>
        <end position="238"/>
    </location>
</feature>
<feature type="active site" description="Proton donor" evidence="2">
    <location>
        <position position="204"/>
    </location>
</feature>
<feature type="binding site" evidence="1">
    <location>
        <position position="4"/>
    </location>
    <ligand>
        <name>a purine D-ribonucleoside</name>
        <dbReference type="ChEBI" id="CHEBI:142355"/>
        <note>ligand shared between dimeric partners</note>
    </ligand>
</feature>
<feature type="binding site" description="in other chain" evidence="1">
    <location>
        <position position="20"/>
    </location>
    <ligand>
        <name>phosphate</name>
        <dbReference type="ChEBI" id="CHEBI:43474"/>
        <note>ligand shared between dimeric partners</note>
    </ligand>
</feature>
<feature type="binding site" description="in other chain" evidence="1">
    <location>
        <position position="24"/>
    </location>
    <ligand>
        <name>phosphate</name>
        <dbReference type="ChEBI" id="CHEBI:43474"/>
        <note>ligand shared between dimeric partners</note>
    </ligand>
</feature>
<feature type="binding site" evidence="1">
    <location>
        <position position="43"/>
    </location>
    <ligand>
        <name>phosphate</name>
        <dbReference type="ChEBI" id="CHEBI:43474"/>
        <note>ligand shared between dimeric partners</note>
    </ligand>
</feature>
<feature type="binding site" description="in other chain" evidence="1">
    <location>
        <begin position="87"/>
        <end position="90"/>
    </location>
    <ligand>
        <name>phosphate</name>
        <dbReference type="ChEBI" id="CHEBI:43474"/>
        <note>ligand shared between dimeric partners</note>
    </ligand>
</feature>
<feature type="binding site" description="in other chain" evidence="1">
    <location>
        <begin position="179"/>
        <end position="181"/>
    </location>
    <ligand>
        <name>a purine D-ribonucleoside</name>
        <dbReference type="ChEBI" id="CHEBI:142355"/>
        <note>ligand shared between dimeric partners</note>
    </ligand>
</feature>
<feature type="binding site" description="in other chain" evidence="1">
    <location>
        <begin position="203"/>
        <end position="204"/>
    </location>
    <ligand>
        <name>a purine D-ribonucleoside</name>
        <dbReference type="ChEBI" id="CHEBI:142355"/>
        <note>ligand shared between dimeric partners</note>
    </ligand>
</feature>
<feature type="site" description="Important for catalytic activity" evidence="2">
    <location>
        <position position="217"/>
    </location>
</feature>
<keyword id="KW-0328">Glycosyltransferase</keyword>
<keyword id="KW-0808">Transferase</keyword>
<gene>
    <name evidence="2" type="primary">deoD</name>
    <name type="ordered locus">NTHI0644</name>
</gene>
<sequence length="238" mass="25885">MTPHINAPEGAFADVVLMPGDPLRAKYIAETFLQDVVEVTNVRNMLGFTGTYKGRKISIMGHGMGIPSCSIYAKELITEYGVKKIIRVGSCGTVRMDVKVRDVIIGLGACTDSKVNRIRFKDNDFAAIADFDMAQAAVQAAKAKGKVVRVGNLFSADLFYTPDVEMFDVMEKYGILGVEMEAAGIYGVAAEYGAKALTICTVSDHIRTHEQTTAEERQLTFNDMIEIALDSVLIGDAL</sequence>
<proteinExistence type="inferred from homology"/>
<comment type="function">
    <text evidence="2">Catalyzes the reversible phosphorolytic breakdown of the N-glycosidic bond in the beta-(deoxy)ribonucleoside molecules, with the formation of the corresponding free purine bases and pentose-1-phosphate.</text>
</comment>
<comment type="catalytic activity">
    <reaction evidence="2">
        <text>a purine D-ribonucleoside + phosphate = a purine nucleobase + alpha-D-ribose 1-phosphate</text>
        <dbReference type="Rhea" id="RHEA:19805"/>
        <dbReference type="ChEBI" id="CHEBI:26386"/>
        <dbReference type="ChEBI" id="CHEBI:43474"/>
        <dbReference type="ChEBI" id="CHEBI:57720"/>
        <dbReference type="ChEBI" id="CHEBI:142355"/>
        <dbReference type="EC" id="2.4.2.1"/>
    </reaction>
</comment>
<comment type="catalytic activity">
    <reaction evidence="2">
        <text>a purine 2'-deoxy-D-ribonucleoside + phosphate = a purine nucleobase + 2-deoxy-alpha-D-ribose 1-phosphate</text>
        <dbReference type="Rhea" id="RHEA:36431"/>
        <dbReference type="ChEBI" id="CHEBI:26386"/>
        <dbReference type="ChEBI" id="CHEBI:43474"/>
        <dbReference type="ChEBI" id="CHEBI:57259"/>
        <dbReference type="ChEBI" id="CHEBI:142361"/>
        <dbReference type="EC" id="2.4.2.1"/>
    </reaction>
</comment>
<comment type="subunit">
    <text evidence="2">Homohexamer; trimer of homodimers.</text>
</comment>
<comment type="similarity">
    <text evidence="2">Belongs to the PNP/UDP phosphorylase family.</text>
</comment>
<protein>
    <recommendedName>
        <fullName evidence="2">Purine nucleoside phosphorylase DeoD-type</fullName>
        <shortName evidence="2">PNP</shortName>
        <ecNumber evidence="2">2.4.2.1</ecNumber>
    </recommendedName>
</protein>
<name>DEOD_HAEI8</name>
<evidence type="ECO:0000250" key="1">
    <source>
        <dbReference type="UniProtKB" id="P50389"/>
    </source>
</evidence>
<evidence type="ECO:0000255" key="2">
    <source>
        <dbReference type="HAMAP-Rule" id="MF_01627"/>
    </source>
</evidence>
<accession>Q4QN30</accession>
<dbReference type="EC" id="2.4.2.1" evidence="2"/>
<dbReference type="EMBL" id="CP000057">
    <property type="protein sequence ID" value="AAX87567.1"/>
    <property type="molecule type" value="Genomic_DNA"/>
</dbReference>
<dbReference type="RefSeq" id="WP_005694122.1">
    <property type="nucleotide sequence ID" value="NC_007146.2"/>
</dbReference>
<dbReference type="SMR" id="Q4QN30"/>
<dbReference type="KEGG" id="hit:NTHI0644"/>
<dbReference type="HOGENOM" id="CLU_068457_2_0_6"/>
<dbReference type="Proteomes" id="UP000002525">
    <property type="component" value="Chromosome"/>
</dbReference>
<dbReference type="GO" id="GO:0005829">
    <property type="term" value="C:cytosol"/>
    <property type="evidence" value="ECO:0007669"/>
    <property type="project" value="TreeGrafter"/>
</dbReference>
<dbReference type="GO" id="GO:0004731">
    <property type="term" value="F:purine-nucleoside phosphorylase activity"/>
    <property type="evidence" value="ECO:0007669"/>
    <property type="project" value="UniProtKB-UniRule"/>
</dbReference>
<dbReference type="GO" id="GO:0006152">
    <property type="term" value="P:purine nucleoside catabolic process"/>
    <property type="evidence" value="ECO:0007669"/>
    <property type="project" value="TreeGrafter"/>
</dbReference>
<dbReference type="CDD" id="cd09006">
    <property type="entry name" value="PNP_EcPNPI-like"/>
    <property type="match status" value="1"/>
</dbReference>
<dbReference type="FunFam" id="3.40.50.1580:FF:000002">
    <property type="entry name" value="Purine nucleoside phosphorylase DeoD-type"/>
    <property type="match status" value="1"/>
</dbReference>
<dbReference type="Gene3D" id="3.40.50.1580">
    <property type="entry name" value="Nucleoside phosphorylase domain"/>
    <property type="match status" value="1"/>
</dbReference>
<dbReference type="HAMAP" id="MF_01627">
    <property type="entry name" value="Pur_nucleosid_phosp"/>
    <property type="match status" value="1"/>
</dbReference>
<dbReference type="InterPro" id="IPR004402">
    <property type="entry name" value="DeoD-type"/>
</dbReference>
<dbReference type="InterPro" id="IPR018016">
    <property type="entry name" value="Nucleoside_phosphorylase_CS"/>
</dbReference>
<dbReference type="InterPro" id="IPR000845">
    <property type="entry name" value="Nucleoside_phosphorylase_d"/>
</dbReference>
<dbReference type="InterPro" id="IPR035994">
    <property type="entry name" value="Nucleoside_phosphorylase_sf"/>
</dbReference>
<dbReference type="NCBIfam" id="TIGR00107">
    <property type="entry name" value="deoD"/>
    <property type="match status" value="1"/>
</dbReference>
<dbReference type="NCBIfam" id="NF004489">
    <property type="entry name" value="PRK05819.1"/>
    <property type="match status" value="1"/>
</dbReference>
<dbReference type="NCBIfam" id="NF009914">
    <property type="entry name" value="PRK13374.1"/>
    <property type="match status" value="1"/>
</dbReference>
<dbReference type="PANTHER" id="PTHR43691:SF2">
    <property type="entry name" value="PURINE NUCLEOSIDE PHOSPHORYLASE DEOD-TYPE"/>
    <property type="match status" value="1"/>
</dbReference>
<dbReference type="PANTHER" id="PTHR43691">
    <property type="entry name" value="URIDINE PHOSPHORYLASE"/>
    <property type="match status" value="1"/>
</dbReference>
<dbReference type="Pfam" id="PF01048">
    <property type="entry name" value="PNP_UDP_1"/>
    <property type="match status" value="1"/>
</dbReference>
<dbReference type="SUPFAM" id="SSF53167">
    <property type="entry name" value="Purine and uridine phosphorylases"/>
    <property type="match status" value="1"/>
</dbReference>
<dbReference type="PROSITE" id="PS01232">
    <property type="entry name" value="PNP_UDP_1"/>
    <property type="match status" value="1"/>
</dbReference>